<protein>
    <recommendedName>
        <fullName evidence="2">Macrodomain Ori protein</fullName>
    </recommendedName>
</protein>
<keyword id="KW-1185">Reference proteome</keyword>
<accession>P0ADN4</accession>
<accession>P27827</accession>
<feature type="initiator methionine" description="Removed" evidence="1">
    <location>
        <position position="1"/>
    </location>
</feature>
<feature type="chain" id="PRO_0000169642" description="Macrodomain Ori protein">
    <location>
        <begin position="2"/>
        <end position="112"/>
    </location>
</feature>
<feature type="region of interest" description="Disordered" evidence="3">
    <location>
        <begin position="91"/>
        <end position="112"/>
    </location>
</feature>
<feature type="compositionally biased region" description="Acidic residues" evidence="3">
    <location>
        <begin position="103"/>
        <end position="112"/>
    </location>
</feature>
<proteinExistence type="inferred from homology"/>
<reference key="1">
    <citation type="journal article" date="2001" name="Nature">
        <title>Genome sequence of enterohaemorrhagic Escherichia coli O157:H7.</title>
        <authorList>
            <person name="Perna N.T."/>
            <person name="Plunkett G. III"/>
            <person name="Burland V."/>
            <person name="Mau B."/>
            <person name="Glasner J.D."/>
            <person name="Rose D.J."/>
            <person name="Mayhew G.F."/>
            <person name="Evans P.S."/>
            <person name="Gregor J."/>
            <person name="Kirkpatrick H.A."/>
            <person name="Posfai G."/>
            <person name="Hackett J."/>
            <person name="Klink S."/>
            <person name="Boutin A."/>
            <person name="Shao Y."/>
            <person name="Miller L."/>
            <person name="Grotbeck E.J."/>
            <person name="Davis N.W."/>
            <person name="Lim A."/>
            <person name="Dimalanta E.T."/>
            <person name="Potamousis K."/>
            <person name="Apodaca J."/>
            <person name="Anantharaman T.S."/>
            <person name="Lin J."/>
            <person name="Yen G."/>
            <person name="Schwartz D.C."/>
            <person name="Welch R.A."/>
            <person name="Blattner F.R."/>
        </authorList>
    </citation>
    <scope>NUCLEOTIDE SEQUENCE [LARGE SCALE GENOMIC DNA]</scope>
    <source>
        <strain>O157:H7 / EDL933 / ATCC 700927 / EHEC</strain>
    </source>
</reference>
<reference key="2">
    <citation type="journal article" date="2001" name="DNA Res.">
        <title>Complete genome sequence of enterohemorrhagic Escherichia coli O157:H7 and genomic comparison with a laboratory strain K-12.</title>
        <authorList>
            <person name="Hayashi T."/>
            <person name="Makino K."/>
            <person name="Ohnishi M."/>
            <person name="Kurokawa K."/>
            <person name="Ishii K."/>
            <person name="Yokoyama K."/>
            <person name="Han C.-G."/>
            <person name="Ohtsubo E."/>
            <person name="Nakayama K."/>
            <person name="Murata T."/>
            <person name="Tanaka M."/>
            <person name="Tobe T."/>
            <person name="Iida T."/>
            <person name="Takami H."/>
            <person name="Honda T."/>
            <person name="Sasakawa C."/>
            <person name="Ogasawara N."/>
            <person name="Yasunaga T."/>
            <person name="Kuhara S."/>
            <person name="Shiba T."/>
            <person name="Hattori M."/>
            <person name="Shinagawa H."/>
        </authorList>
    </citation>
    <scope>NUCLEOTIDE SEQUENCE [LARGE SCALE GENOMIC DNA]</scope>
    <source>
        <strain>O157:H7 / Sakai / RIMD 0509952 / EHEC</strain>
    </source>
</reference>
<evidence type="ECO:0000250" key="1"/>
<evidence type="ECO:0000250" key="2">
    <source>
        <dbReference type="UniProtKB" id="P0ADN2"/>
    </source>
</evidence>
<evidence type="ECO:0000256" key="3">
    <source>
        <dbReference type="SAM" id="MobiDB-lite"/>
    </source>
</evidence>
<evidence type="ECO:0000305" key="4"/>
<sequence length="112" mass="13134">MAESFTTTNRYFDNKHYPRGFSRHGDFTIKEAQLLERHGYAFNELDLGKREPVTEEEKLFVAVCRGEREPVTEAERVWSKYMTRIKRPKRFHTLSGGKPQVEGAEDYTDSDD</sequence>
<name>MAOP_ECO57</name>
<dbReference type="EMBL" id="AE005174">
    <property type="protein sequence ID" value="AAG58960.1"/>
    <property type="molecule type" value="Genomic_DNA"/>
</dbReference>
<dbReference type="EMBL" id="BA000007">
    <property type="protein sequence ID" value="BAB38122.1"/>
    <property type="molecule type" value="Genomic_DNA"/>
</dbReference>
<dbReference type="PIR" id="C91216">
    <property type="entry name" value="C91216"/>
</dbReference>
<dbReference type="PIR" id="D86062">
    <property type="entry name" value="D86062"/>
</dbReference>
<dbReference type="RefSeq" id="NP_312726.1">
    <property type="nucleotide sequence ID" value="NC_002695.1"/>
</dbReference>
<dbReference type="SMR" id="P0ADN4"/>
<dbReference type="STRING" id="155864.Z5276"/>
<dbReference type="GeneID" id="915294"/>
<dbReference type="KEGG" id="ece:Z5276"/>
<dbReference type="KEGG" id="ecs:ECs_4699"/>
<dbReference type="PATRIC" id="fig|386585.9.peg.4905"/>
<dbReference type="eggNOG" id="COG3085">
    <property type="taxonomic scope" value="Bacteria"/>
</dbReference>
<dbReference type="HOGENOM" id="CLU_144599_2_2_6"/>
<dbReference type="OMA" id="CRGIREP"/>
<dbReference type="Proteomes" id="UP000000558">
    <property type="component" value="Chromosome"/>
</dbReference>
<dbReference type="Proteomes" id="UP000002519">
    <property type="component" value="Chromosome"/>
</dbReference>
<dbReference type="InterPro" id="IPR007335">
    <property type="entry name" value="DUF413"/>
</dbReference>
<dbReference type="NCBIfam" id="NF008251">
    <property type="entry name" value="PRK11027.1-1"/>
    <property type="match status" value="1"/>
</dbReference>
<dbReference type="NCBIfam" id="NF008252">
    <property type="entry name" value="PRK11027.1-2"/>
    <property type="match status" value="1"/>
</dbReference>
<dbReference type="NCBIfam" id="NF008253">
    <property type="entry name" value="PRK11027.1-4"/>
    <property type="match status" value="1"/>
</dbReference>
<dbReference type="Pfam" id="PF04219">
    <property type="entry name" value="DUF413"/>
    <property type="match status" value="1"/>
</dbReference>
<comment type="function">
    <text evidence="2">Involved in the organization of the Ori region of the chromosome into a macrodomain (MD) (By similarity). It constrains DNA mobility in the Ori macrodomain and limits long-distance DNA interactions with other chromosomal regions (By similarity).</text>
</comment>
<comment type="similarity">
    <text evidence="4">Belongs to the MaoP family.</text>
</comment>
<organism>
    <name type="scientific">Escherichia coli O157:H7</name>
    <dbReference type="NCBI Taxonomy" id="83334"/>
    <lineage>
        <taxon>Bacteria</taxon>
        <taxon>Pseudomonadati</taxon>
        <taxon>Pseudomonadota</taxon>
        <taxon>Gammaproteobacteria</taxon>
        <taxon>Enterobacterales</taxon>
        <taxon>Enterobacteriaceae</taxon>
        <taxon>Escherichia</taxon>
    </lineage>
</organism>
<gene>
    <name evidence="2" type="primary">maoP</name>
    <name type="synonym">yifE</name>
    <name type="ordered locus">Z5276</name>
    <name type="ordered locus">ECs4699</name>
</gene>